<gene>
    <name evidence="1" type="primary">fni</name>
    <name type="ordered locus">syc2161_c</name>
</gene>
<dbReference type="EC" id="5.3.3.2" evidence="1"/>
<dbReference type="EMBL" id="AP008231">
    <property type="protein sequence ID" value="BAD80351.1"/>
    <property type="molecule type" value="Genomic_DNA"/>
</dbReference>
<dbReference type="RefSeq" id="WP_011244471.1">
    <property type="nucleotide sequence ID" value="NZ_CP085785.1"/>
</dbReference>
<dbReference type="SMR" id="Q5N019"/>
<dbReference type="GeneID" id="72430806"/>
<dbReference type="KEGG" id="syc:syc2161_c"/>
<dbReference type="eggNOG" id="COG1304">
    <property type="taxonomic scope" value="Bacteria"/>
</dbReference>
<dbReference type="Proteomes" id="UP000001175">
    <property type="component" value="Chromosome"/>
</dbReference>
<dbReference type="GO" id="GO:0005737">
    <property type="term" value="C:cytoplasm"/>
    <property type="evidence" value="ECO:0007669"/>
    <property type="project" value="UniProtKB-SubCell"/>
</dbReference>
<dbReference type="GO" id="GO:0010181">
    <property type="term" value="F:FMN binding"/>
    <property type="evidence" value="ECO:0007669"/>
    <property type="project" value="UniProtKB-UniRule"/>
</dbReference>
<dbReference type="GO" id="GO:0004452">
    <property type="term" value="F:isopentenyl-diphosphate delta-isomerase activity"/>
    <property type="evidence" value="ECO:0007669"/>
    <property type="project" value="UniProtKB-UniRule"/>
</dbReference>
<dbReference type="GO" id="GO:0000287">
    <property type="term" value="F:magnesium ion binding"/>
    <property type="evidence" value="ECO:0007669"/>
    <property type="project" value="UniProtKB-UniRule"/>
</dbReference>
<dbReference type="GO" id="GO:0070402">
    <property type="term" value="F:NADPH binding"/>
    <property type="evidence" value="ECO:0007669"/>
    <property type="project" value="UniProtKB-UniRule"/>
</dbReference>
<dbReference type="GO" id="GO:0016491">
    <property type="term" value="F:oxidoreductase activity"/>
    <property type="evidence" value="ECO:0007669"/>
    <property type="project" value="InterPro"/>
</dbReference>
<dbReference type="GO" id="GO:0008299">
    <property type="term" value="P:isoprenoid biosynthetic process"/>
    <property type="evidence" value="ECO:0007669"/>
    <property type="project" value="UniProtKB-UniRule"/>
</dbReference>
<dbReference type="CDD" id="cd02811">
    <property type="entry name" value="IDI-2_FMN"/>
    <property type="match status" value="1"/>
</dbReference>
<dbReference type="Gene3D" id="3.20.20.70">
    <property type="entry name" value="Aldolase class I"/>
    <property type="match status" value="1"/>
</dbReference>
<dbReference type="HAMAP" id="MF_00354">
    <property type="entry name" value="Idi_2"/>
    <property type="match status" value="1"/>
</dbReference>
<dbReference type="InterPro" id="IPR013785">
    <property type="entry name" value="Aldolase_TIM"/>
</dbReference>
<dbReference type="InterPro" id="IPR000262">
    <property type="entry name" value="FMN-dep_DH"/>
</dbReference>
<dbReference type="InterPro" id="IPR011179">
    <property type="entry name" value="IPdP_isomerase"/>
</dbReference>
<dbReference type="NCBIfam" id="TIGR02151">
    <property type="entry name" value="IPP_isom_2"/>
    <property type="match status" value="1"/>
</dbReference>
<dbReference type="PANTHER" id="PTHR43665">
    <property type="entry name" value="ISOPENTENYL-DIPHOSPHATE DELTA-ISOMERASE"/>
    <property type="match status" value="1"/>
</dbReference>
<dbReference type="PANTHER" id="PTHR43665:SF1">
    <property type="entry name" value="ISOPENTENYL-DIPHOSPHATE DELTA-ISOMERASE"/>
    <property type="match status" value="1"/>
</dbReference>
<dbReference type="Pfam" id="PF01070">
    <property type="entry name" value="FMN_dh"/>
    <property type="match status" value="1"/>
</dbReference>
<dbReference type="PIRSF" id="PIRSF003314">
    <property type="entry name" value="IPP_isomerase"/>
    <property type="match status" value="1"/>
</dbReference>
<dbReference type="SUPFAM" id="SSF51395">
    <property type="entry name" value="FMN-linked oxidoreductases"/>
    <property type="match status" value="1"/>
</dbReference>
<reference key="1">
    <citation type="journal article" date="2007" name="Photosyn. Res.">
        <title>Complete nucleotide sequence of the freshwater unicellular cyanobacterium Synechococcus elongatus PCC 6301 chromosome: gene content and organization.</title>
        <authorList>
            <person name="Sugita C."/>
            <person name="Ogata K."/>
            <person name="Shikata M."/>
            <person name="Jikuya H."/>
            <person name="Takano J."/>
            <person name="Furumichi M."/>
            <person name="Kanehisa M."/>
            <person name="Omata T."/>
            <person name="Sugiura M."/>
            <person name="Sugita M."/>
        </authorList>
    </citation>
    <scope>NUCLEOTIDE SEQUENCE [LARGE SCALE GENOMIC DNA]</scope>
    <source>
        <strain>ATCC 27144 / PCC 6301 / SAUG 1402/1</strain>
    </source>
</reference>
<feature type="chain" id="PRO_0000229515" description="Isopentenyl-diphosphate delta-isomerase">
    <location>
        <begin position="1"/>
        <end position="348"/>
    </location>
</feature>
<feature type="binding site" evidence="1">
    <location>
        <begin position="14"/>
        <end position="15"/>
    </location>
    <ligand>
        <name>substrate</name>
    </ligand>
</feature>
<feature type="binding site" evidence="1">
    <location>
        <position position="72"/>
    </location>
    <ligand>
        <name>FMN</name>
        <dbReference type="ChEBI" id="CHEBI:58210"/>
    </ligand>
</feature>
<feature type="binding site" evidence="1">
    <location>
        <begin position="73"/>
        <end position="75"/>
    </location>
    <ligand>
        <name>FMN</name>
        <dbReference type="ChEBI" id="CHEBI:58210"/>
    </ligand>
</feature>
<feature type="binding site" evidence="1">
    <location>
        <begin position="103"/>
        <end position="105"/>
    </location>
    <ligand>
        <name>substrate</name>
    </ligand>
</feature>
<feature type="binding site" evidence="1">
    <location>
        <position position="103"/>
    </location>
    <ligand>
        <name>FMN</name>
        <dbReference type="ChEBI" id="CHEBI:58210"/>
    </ligand>
</feature>
<feature type="binding site" evidence="1">
    <location>
        <position position="131"/>
    </location>
    <ligand>
        <name>FMN</name>
        <dbReference type="ChEBI" id="CHEBI:58210"/>
    </ligand>
</feature>
<feature type="binding site" evidence="1">
    <location>
        <position position="166"/>
    </location>
    <ligand>
        <name>substrate</name>
    </ligand>
</feature>
<feature type="binding site" evidence="1">
    <location>
        <position position="167"/>
    </location>
    <ligand>
        <name>Mg(2+)</name>
        <dbReference type="ChEBI" id="CHEBI:18420"/>
    </ligand>
</feature>
<feature type="binding site" evidence="1">
    <location>
        <position position="198"/>
    </location>
    <ligand>
        <name>FMN</name>
        <dbReference type="ChEBI" id="CHEBI:58210"/>
    </ligand>
</feature>
<feature type="binding site" evidence="1">
    <location>
        <position position="228"/>
    </location>
    <ligand>
        <name>FMN</name>
        <dbReference type="ChEBI" id="CHEBI:58210"/>
    </ligand>
</feature>
<feature type="binding site" evidence="1">
    <location>
        <begin position="278"/>
        <end position="280"/>
    </location>
    <ligand>
        <name>FMN</name>
        <dbReference type="ChEBI" id="CHEBI:58210"/>
    </ligand>
</feature>
<feature type="binding site" evidence="1">
    <location>
        <begin position="299"/>
        <end position="300"/>
    </location>
    <ligand>
        <name>FMN</name>
        <dbReference type="ChEBI" id="CHEBI:58210"/>
    </ligand>
</feature>
<name>IDI2_SYNP6</name>
<evidence type="ECO:0000255" key="1">
    <source>
        <dbReference type="HAMAP-Rule" id="MF_00354"/>
    </source>
</evidence>
<protein>
    <recommendedName>
        <fullName evidence="1">Isopentenyl-diphosphate delta-isomerase</fullName>
        <shortName evidence="1">IPP isomerase</shortName>
        <ecNumber evidence="1">5.3.3.2</ecNumber>
    </recommendedName>
    <alternativeName>
        <fullName evidence="1">Isopentenyl diphosphate:dimethylallyl diphosphate isomerase</fullName>
    </alternativeName>
    <alternativeName>
        <fullName evidence="1">Isopentenyl pyrophosphate isomerase</fullName>
    </alternativeName>
    <alternativeName>
        <fullName evidence="1">Type 2 isopentenyl diphosphate isomerase</fullName>
        <shortName evidence="1">IDI-2</shortName>
    </alternativeName>
</protein>
<keyword id="KW-0963">Cytoplasm</keyword>
<keyword id="KW-0285">Flavoprotein</keyword>
<keyword id="KW-0288">FMN</keyword>
<keyword id="KW-0413">Isomerase</keyword>
<keyword id="KW-0414">Isoprene biosynthesis</keyword>
<keyword id="KW-0460">Magnesium</keyword>
<keyword id="KW-0479">Metal-binding</keyword>
<keyword id="KW-0521">NADP</keyword>
<proteinExistence type="inferred from homology"/>
<organism>
    <name type="scientific">Synechococcus sp. (strain ATCC 27144 / PCC 6301 / SAUG 1402/1)</name>
    <name type="common">Anacystis nidulans</name>
    <dbReference type="NCBI Taxonomy" id="269084"/>
    <lineage>
        <taxon>Bacteria</taxon>
        <taxon>Bacillati</taxon>
        <taxon>Cyanobacteriota</taxon>
        <taxon>Cyanophyceae</taxon>
        <taxon>Synechococcales</taxon>
        <taxon>Synechococcaceae</taxon>
        <taxon>Synechococcus</taxon>
    </lineage>
</organism>
<comment type="function">
    <text evidence="1">Involved in the biosynthesis of isoprenoids. Catalyzes the 1,3-allylic rearrangement of the homoallylic substrate isopentenyl (IPP) to its allylic isomer, dimethylallyl diphosphate (DMAPP).</text>
</comment>
<comment type="catalytic activity">
    <reaction evidence="1">
        <text>isopentenyl diphosphate = dimethylallyl diphosphate</text>
        <dbReference type="Rhea" id="RHEA:23284"/>
        <dbReference type="ChEBI" id="CHEBI:57623"/>
        <dbReference type="ChEBI" id="CHEBI:128769"/>
        <dbReference type="EC" id="5.3.3.2"/>
    </reaction>
</comment>
<comment type="cofactor">
    <cofactor evidence="1">
        <name>FMN</name>
        <dbReference type="ChEBI" id="CHEBI:58210"/>
    </cofactor>
</comment>
<comment type="cofactor">
    <cofactor evidence="1">
        <name>NADPH</name>
        <dbReference type="ChEBI" id="CHEBI:57783"/>
    </cofactor>
</comment>
<comment type="cofactor">
    <cofactor evidence="1">
        <name>Mg(2+)</name>
        <dbReference type="ChEBI" id="CHEBI:18420"/>
    </cofactor>
</comment>
<comment type="subunit">
    <text evidence="1">Homooctamer. Dimer of tetramers.</text>
</comment>
<comment type="subcellular location">
    <subcellularLocation>
        <location evidence="1">Cytoplasm</location>
    </subcellularLocation>
</comment>
<comment type="similarity">
    <text evidence="1">Belongs to the IPP isomerase type 2 family.</text>
</comment>
<sequence length="348" mass="37035">MNFPIAAESSLPQRKAEHLQLCLEAGVESPEVTTGLERYRFQHCALPNLSLQALDLGTQFLGRSLGAPLLISSMTGGTETAQRINCRLAIAAQKYRLAMGVGSQRVMLRQPETTPTFDVRDLAPDILLLANLGAVQLNYGVTPAEAQQLVDRLGADALILHLNPLQECIQAEGDTDFRGLLGRIGELCAALSVPVIVKEVGNGLSAMVAAQLLSAGVAALDVAGAGGTSWSRVEGQRAVDPLLRRLGDRFGDWGIPTAESLQQVRQVSATVPLIASGGIRHGLDAAKAIALGADLVGLARPFLVAADQSEEVLDQWITELLAELRIVRFCTDSGDWAALRRPGVLRPC</sequence>
<accession>Q5N019</accession>